<reference key="1">
    <citation type="journal article" date="2010" name="J. Bacteriol.">
        <title>The genetic basis of laboratory adaptation in Caulobacter crescentus.</title>
        <authorList>
            <person name="Marks M.E."/>
            <person name="Castro-Rojas C.M."/>
            <person name="Teiling C."/>
            <person name="Du L."/>
            <person name="Kapatral V."/>
            <person name="Walunas T.L."/>
            <person name="Crosson S."/>
        </authorList>
    </citation>
    <scope>NUCLEOTIDE SEQUENCE [LARGE SCALE GENOMIC DNA]</scope>
    <source>
        <strain>NA1000 / CB15N</strain>
    </source>
</reference>
<dbReference type="EMBL" id="CP001340">
    <property type="protein sequence ID" value="ACL95257.1"/>
    <property type="molecule type" value="Genomic_DNA"/>
</dbReference>
<dbReference type="RefSeq" id="WP_010919589.1">
    <property type="nucleotide sequence ID" value="NC_011916.1"/>
</dbReference>
<dbReference type="RefSeq" id="YP_002517165.1">
    <property type="nucleotide sequence ID" value="NC_011916.1"/>
</dbReference>
<dbReference type="SMR" id="B8GW65"/>
<dbReference type="GeneID" id="7331258"/>
<dbReference type="KEGG" id="ccs:CCNA_01792"/>
<dbReference type="PATRIC" id="fig|565050.3.peg.1764"/>
<dbReference type="HOGENOM" id="CLU_129084_2_2_5"/>
<dbReference type="OrthoDB" id="9801927at2"/>
<dbReference type="PhylomeDB" id="B8GW65"/>
<dbReference type="Proteomes" id="UP000001364">
    <property type="component" value="Chromosome"/>
</dbReference>
<dbReference type="GO" id="GO:0015934">
    <property type="term" value="C:large ribosomal subunit"/>
    <property type="evidence" value="ECO:0007669"/>
    <property type="project" value="InterPro"/>
</dbReference>
<dbReference type="GO" id="GO:0003735">
    <property type="term" value="F:structural constituent of ribosome"/>
    <property type="evidence" value="ECO:0007669"/>
    <property type="project" value="InterPro"/>
</dbReference>
<dbReference type="GO" id="GO:0006412">
    <property type="term" value="P:translation"/>
    <property type="evidence" value="ECO:0007669"/>
    <property type="project" value="UniProtKB-UniRule"/>
</dbReference>
<dbReference type="Gene3D" id="1.20.5.640">
    <property type="entry name" value="Single helix bin"/>
    <property type="match status" value="1"/>
</dbReference>
<dbReference type="HAMAP" id="MF_00340">
    <property type="entry name" value="Ribosomal_bL32"/>
    <property type="match status" value="1"/>
</dbReference>
<dbReference type="InterPro" id="IPR002677">
    <property type="entry name" value="Ribosomal_bL32"/>
</dbReference>
<dbReference type="InterPro" id="IPR044957">
    <property type="entry name" value="Ribosomal_bL32_bact"/>
</dbReference>
<dbReference type="InterPro" id="IPR011332">
    <property type="entry name" value="Ribosomal_zn-bd"/>
</dbReference>
<dbReference type="NCBIfam" id="TIGR01031">
    <property type="entry name" value="rpmF_bact"/>
    <property type="match status" value="1"/>
</dbReference>
<dbReference type="PANTHER" id="PTHR35534">
    <property type="entry name" value="50S RIBOSOMAL PROTEIN L32"/>
    <property type="match status" value="1"/>
</dbReference>
<dbReference type="PANTHER" id="PTHR35534:SF1">
    <property type="entry name" value="LARGE RIBOSOMAL SUBUNIT PROTEIN BL32"/>
    <property type="match status" value="1"/>
</dbReference>
<dbReference type="Pfam" id="PF01783">
    <property type="entry name" value="Ribosomal_L32p"/>
    <property type="match status" value="1"/>
</dbReference>
<dbReference type="SUPFAM" id="SSF57829">
    <property type="entry name" value="Zn-binding ribosomal proteins"/>
    <property type="match status" value="1"/>
</dbReference>
<proteinExistence type="inferred from homology"/>
<organism>
    <name type="scientific">Caulobacter vibrioides (strain NA1000 / CB15N)</name>
    <name type="common">Caulobacter crescentus</name>
    <dbReference type="NCBI Taxonomy" id="565050"/>
    <lineage>
        <taxon>Bacteria</taxon>
        <taxon>Pseudomonadati</taxon>
        <taxon>Pseudomonadota</taxon>
        <taxon>Alphaproteobacteria</taxon>
        <taxon>Caulobacterales</taxon>
        <taxon>Caulobacteraceae</taxon>
        <taxon>Caulobacter</taxon>
    </lineage>
</organism>
<comment type="similarity">
    <text evidence="1">Belongs to the bacterial ribosomal protein bL32 family.</text>
</comment>
<sequence>MAVPKRKTSPSRRNMRRSHHALGANSFIEDKDTGELRRPHHVDLKTGMYNGKQILTPKED</sequence>
<evidence type="ECO:0000255" key="1">
    <source>
        <dbReference type="HAMAP-Rule" id="MF_00340"/>
    </source>
</evidence>
<evidence type="ECO:0000256" key="2">
    <source>
        <dbReference type="SAM" id="MobiDB-lite"/>
    </source>
</evidence>
<evidence type="ECO:0000305" key="3"/>
<name>RL32_CAUVN</name>
<feature type="chain" id="PRO_1000195967" description="Large ribosomal subunit protein bL32">
    <location>
        <begin position="1"/>
        <end position="60"/>
    </location>
</feature>
<feature type="region of interest" description="Disordered" evidence="2">
    <location>
        <begin position="1"/>
        <end position="60"/>
    </location>
</feature>
<feature type="compositionally biased region" description="Basic residues" evidence="2">
    <location>
        <begin position="1"/>
        <end position="20"/>
    </location>
</feature>
<feature type="compositionally biased region" description="Basic and acidic residues" evidence="2">
    <location>
        <begin position="28"/>
        <end position="44"/>
    </location>
</feature>
<accession>B8GW65</accession>
<gene>
    <name evidence="1" type="primary">rpmF</name>
    <name type="ordered locus">CCNA_01792</name>
</gene>
<keyword id="KW-1185">Reference proteome</keyword>
<keyword id="KW-0687">Ribonucleoprotein</keyword>
<keyword id="KW-0689">Ribosomal protein</keyword>
<protein>
    <recommendedName>
        <fullName evidence="1">Large ribosomal subunit protein bL32</fullName>
    </recommendedName>
    <alternativeName>
        <fullName evidence="3">50S ribosomal protein L32</fullName>
    </alternativeName>
</protein>